<protein>
    <recommendedName>
        <fullName evidence="1">Lysine--tRNA ligase</fullName>
        <ecNumber evidence="1">6.1.1.6</ecNumber>
    </recommendedName>
    <alternativeName>
        <fullName evidence="1">Lysyl-tRNA synthetase</fullName>
        <shortName evidence="1">LysRS</shortName>
    </alternativeName>
</protein>
<organism>
    <name type="scientific">Cupriavidus metallidurans (strain ATCC 43123 / DSM 2839 / NBRC 102507 / CH34)</name>
    <name type="common">Ralstonia metallidurans</name>
    <dbReference type="NCBI Taxonomy" id="266264"/>
    <lineage>
        <taxon>Bacteria</taxon>
        <taxon>Pseudomonadati</taxon>
        <taxon>Pseudomonadota</taxon>
        <taxon>Betaproteobacteria</taxon>
        <taxon>Burkholderiales</taxon>
        <taxon>Burkholderiaceae</taxon>
        <taxon>Cupriavidus</taxon>
    </lineage>
</organism>
<keyword id="KW-0030">Aminoacyl-tRNA synthetase</keyword>
<keyword id="KW-0067">ATP-binding</keyword>
<keyword id="KW-0963">Cytoplasm</keyword>
<keyword id="KW-0436">Ligase</keyword>
<keyword id="KW-0460">Magnesium</keyword>
<keyword id="KW-0479">Metal-binding</keyword>
<keyword id="KW-0547">Nucleotide-binding</keyword>
<keyword id="KW-0648">Protein biosynthesis</keyword>
<keyword id="KW-1185">Reference proteome</keyword>
<evidence type="ECO:0000255" key="1">
    <source>
        <dbReference type="HAMAP-Rule" id="MF_00252"/>
    </source>
</evidence>
<sequence>MTEPTRAQAATPTTEGLAVDENKIIAERREKLQALRQQGVAFPNDFQPTHQAGALHAQYGETDQATLEASPVEVSIAGRMMLKRVMGKASFATVQDGSGQIQFYITRDKVGEDVYAAFKHWDLGDIISARGELFRTNKGELSVQVRELRLLSKALRPLPDKFHGLADQETKYRQRYVDLIVSPETRSTFRARTQAISSIRRHMADAGFMEVETPMLHPIPGGAAAKPFITHHNALDMQMFMRIAPELYLKRLIVGGFERVFEINRNFRNEGVSPRHNPEFTMMEFYAAYTDYRWLMDFTENLIRQAAIDARGSATVTYQGRELDLSKPFHRLTICGAIQKYAPEYTDAQLADADFLRAELKNKFKINTSAPQFLNAGLGTLQLVLFEETAEAQLWEPTYIVDYPVEVSPLARGSDTQPGITERFELFITGREIANGFSELNDPEDQAERFRKQVEQKDAGDEEAMYFDADYIRALEYGMPPTGGCGIGIDRLVMLLTDSPNIRDVILFPHLRRED</sequence>
<reference key="1">
    <citation type="journal article" date="2010" name="PLoS ONE">
        <title>The complete genome sequence of Cupriavidus metallidurans strain CH34, a master survivalist in harsh and anthropogenic environments.</title>
        <authorList>
            <person name="Janssen P.J."/>
            <person name="Van Houdt R."/>
            <person name="Moors H."/>
            <person name="Monsieurs P."/>
            <person name="Morin N."/>
            <person name="Michaux A."/>
            <person name="Benotmane M.A."/>
            <person name="Leys N."/>
            <person name="Vallaeys T."/>
            <person name="Lapidus A."/>
            <person name="Monchy S."/>
            <person name="Medigue C."/>
            <person name="Taghavi S."/>
            <person name="McCorkle S."/>
            <person name="Dunn J."/>
            <person name="van der Lelie D."/>
            <person name="Mergeay M."/>
        </authorList>
    </citation>
    <scope>NUCLEOTIDE SEQUENCE [LARGE SCALE GENOMIC DNA]</scope>
    <source>
        <strain>ATCC 43123 / DSM 2839 / NBRC 102507 / CH34</strain>
    </source>
</reference>
<name>SYK_CUPMC</name>
<proteinExistence type="inferred from homology"/>
<gene>
    <name evidence="1" type="primary">lysS</name>
    <name type="ordered locus">Rmet_1034</name>
</gene>
<comment type="catalytic activity">
    <reaction evidence="1">
        <text>tRNA(Lys) + L-lysine + ATP = L-lysyl-tRNA(Lys) + AMP + diphosphate</text>
        <dbReference type="Rhea" id="RHEA:20792"/>
        <dbReference type="Rhea" id="RHEA-COMP:9696"/>
        <dbReference type="Rhea" id="RHEA-COMP:9697"/>
        <dbReference type="ChEBI" id="CHEBI:30616"/>
        <dbReference type="ChEBI" id="CHEBI:32551"/>
        <dbReference type="ChEBI" id="CHEBI:33019"/>
        <dbReference type="ChEBI" id="CHEBI:78442"/>
        <dbReference type="ChEBI" id="CHEBI:78529"/>
        <dbReference type="ChEBI" id="CHEBI:456215"/>
        <dbReference type="EC" id="6.1.1.6"/>
    </reaction>
</comment>
<comment type="cofactor">
    <cofactor evidence="1">
        <name>Mg(2+)</name>
        <dbReference type="ChEBI" id="CHEBI:18420"/>
    </cofactor>
    <text evidence="1">Binds 3 Mg(2+) ions per subunit.</text>
</comment>
<comment type="subunit">
    <text evidence="1">Homodimer.</text>
</comment>
<comment type="subcellular location">
    <subcellularLocation>
        <location evidence="1">Cytoplasm</location>
    </subcellularLocation>
</comment>
<comment type="similarity">
    <text evidence="1">Belongs to the class-II aminoacyl-tRNA synthetase family.</text>
</comment>
<dbReference type="EC" id="6.1.1.6" evidence="1"/>
<dbReference type="EMBL" id="CP000352">
    <property type="protein sequence ID" value="ABF07920.1"/>
    <property type="molecule type" value="Genomic_DNA"/>
</dbReference>
<dbReference type="RefSeq" id="WP_011515826.1">
    <property type="nucleotide sequence ID" value="NC_007973.1"/>
</dbReference>
<dbReference type="SMR" id="Q1LPK6"/>
<dbReference type="STRING" id="266264.Rmet_1034"/>
<dbReference type="KEGG" id="rme:Rmet_1034"/>
<dbReference type="eggNOG" id="COG1190">
    <property type="taxonomic scope" value="Bacteria"/>
</dbReference>
<dbReference type="HOGENOM" id="CLU_008255_6_2_4"/>
<dbReference type="Proteomes" id="UP000002429">
    <property type="component" value="Chromosome"/>
</dbReference>
<dbReference type="GO" id="GO:0005829">
    <property type="term" value="C:cytosol"/>
    <property type="evidence" value="ECO:0007669"/>
    <property type="project" value="TreeGrafter"/>
</dbReference>
<dbReference type="GO" id="GO:0005524">
    <property type="term" value="F:ATP binding"/>
    <property type="evidence" value="ECO:0007669"/>
    <property type="project" value="UniProtKB-UniRule"/>
</dbReference>
<dbReference type="GO" id="GO:0004824">
    <property type="term" value="F:lysine-tRNA ligase activity"/>
    <property type="evidence" value="ECO:0007669"/>
    <property type="project" value="UniProtKB-UniRule"/>
</dbReference>
<dbReference type="GO" id="GO:0000287">
    <property type="term" value="F:magnesium ion binding"/>
    <property type="evidence" value="ECO:0007669"/>
    <property type="project" value="UniProtKB-UniRule"/>
</dbReference>
<dbReference type="GO" id="GO:0000049">
    <property type="term" value="F:tRNA binding"/>
    <property type="evidence" value="ECO:0007669"/>
    <property type="project" value="TreeGrafter"/>
</dbReference>
<dbReference type="GO" id="GO:0006430">
    <property type="term" value="P:lysyl-tRNA aminoacylation"/>
    <property type="evidence" value="ECO:0007669"/>
    <property type="project" value="UniProtKB-UniRule"/>
</dbReference>
<dbReference type="CDD" id="cd00775">
    <property type="entry name" value="LysRS_core"/>
    <property type="match status" value="1"/>
</dbReference>
<dbReference type="CDD" id="cd04322">
    <property type="entry name" value="LysRS_N"/>
    <property type="match status" value="1"/>
</dbReference>
<dbReference type="FunFam" id="2.40.50.140:FF:000024">
    <property type="entry name" value="Lysine--tRNA ligase"/>
    <property type="match status" value="1"/>
</dbReference>
<dbReference type="FunFam" id="3.30.930.10:FF:000001">
    <property type="entry name" value="Lysine--tRNA ligase"/>
    <property type="match status" value="1"/>
</dbReference>
<dbReference type="Gene3D" id="3.30.930.10">
    <property type="entry name" value="Bira Bifunctional Protein, Domain 2"/>
    <property type="match status" value="1"/>
</dbReference>
<dbReference type="Gene3D" id="2.40.50.140">
    <property type="entry name" value="Nucleic acid-binding proteins"/>
    <property type="match status" value="1"/>
</dbReference>
<dbReference type="HAMAP" id="MF_00252">
    <property type="entry name" value="Lys_tRNA_synth_class2"/>
    <property type="match status" value="1"/>
</dbReference>
<dbReference type="InterPro" id="IPR004364">
    <property type="entry name" value="Aa-tRNA-synt_II"/>
</dbReference>
<dbReference type="InterPro" id="IPR006195">
    <property type="entry name" value="aa-tRNA-synth_II"/>
</dbReference>
<dbReference type="InterPro" id="IPR045864">
    <property type="entry name" value="aa-tRNA-synth_II/BPL/LPL"/>
</dbReference>
<dbReference type="InterPro" id="IPR002313">
    <property type="entry name" value="Lys-tRNA-ligase_II"/>
</dbReference>
<dbReference type="InterPro" id="IPR044136">
    <property type="entry name" value="Lys-tRNA-ligase_II_N"/>
</dbReference>
<dbReference type="InterPro" id="IPR018149">
    <property type="entry name" value="Lys-tRNA-synth_II_C"/>
</dbReference>
<dbReference type="InterPro" id="IPR012340">
    <property type="entry name" value="NA-bd_OB-fold"/>
</dbReference>
<dbReference type="InterPro" id="IPR004365">
    <property type="entry name" value="NA-bd_OB_tRNA"/>
</dbReference>
<dbReference type="NCBIfam" id="TIGR00499">
    <property type="entry name" value="lysS_bact"/>
    <property type="match status" value="1"/>
</dbReference>
<dbReference type="NCBIfam" id="NF001756">
    <property type="entry name" value="PRK00484.1"/>
    <property type="match status" value="1"/>
</dbReference>
<dbReference type="PANTHER" id="PTHR42918:SF15">
    <property type="entry name" value="LYSINE--TRNA LIGASE, CHLOROPLASTIC_MITOCHONDRIAL"/>
    <property type="match status" value="1"/>
</dbReference>
<dbReference type="PANTHER" id="PTHR42918">
    <property type="entry name" value="LYSYL-TRNA SYNTHETASE"/>
    <property type="match status" value="1"/>
</dbReference>
<dbReference type="Pfam" id="PF00152">
    <property type="entry name" value="tRNA-synt_2"/>
    <property type="match status" value="1"/>
</dbReference>
<dbReference type="Pfam" id="PF01336">
    <property type="entry name" value="tRNA_anti-codon"/>
    <property type="match status" value="1"/>
</dbReference>
<dbReference type="PRINTS" id="PR00982">
    <property type="entry name" value="TRNASYNTHLYS"/>
</dbReference>
<dbReference type="SUPFAM" id="SSF55681">
    <property type="entry name" value="Class II aaRS and biotin synthetases"/>
    <property type="match status" value="1"/>
</dbReference>
<dbReference type="SUPFAM" id="SSF50249">
    <property type="entry name" value="Nucleic acid-binding proteins"/>
    <property type="match status" value="1"/>
</dbReference>
<dbReference type="PROSITE" id="PS50862">
    <property type="entry name" value="AA_TRNA_LIGASE_II"/>
    <property type="match status" value="1"/>
</dbReference>
<accession>Q1LPK6</accession>
<feature type="chain" id="PRO_1000012919" description="Lysine--tRNA ligase">
    <location>
        <begin position="1"/>
        <end position="515"/>
    </location>
</feature>
<feature type="binding site" evidence="1">
    <location>
        <position position="425"/>
    </location>
    <ligand>
        <name>Mg(2+)</name>
        <dbReference type="ChEBI" id="CHEBI:18420"/>
        <label>1</label>
    </ligand>
</feature>
<feature type="binding site" evidence="1">
    <location>
        <position position="432"/>
    </location>
    <ligand>
        <name>Mg(2+)</name>
        <dbReference type="ChEBI" id="CHEBI:18420"/>
        <label>1</label>
    </ligand>
</feature>
<feature type="binding site" evidence="1">
    <location>
        <position position="432"/>
    </location>
    <ligand>
        <name>Mg(2+)</name>
        <dbReference type="ChEBI" id="CHEBI:18420"/>
        <label>2</label>
    </ligand>
</feature>